<evidence type="ECO:0000255" key="1"/>
<evidence type="ECO:0000255" key="2">
    <source>
        <dbReference type="PROSITE-ProRule" id="PRU00505"/>
    </source>
</evidence>
<evidence type="ECO:0000256" key="3">
    <source>
        <dbReference type="SAM" id="MobiDB-lite"/>
    </source>
</evidence>
<evidence type="ECO:0000269" key="4">
    <source>
    </source>
</evidence>
<evidence type="ECO:0000269" key="5">
    <source>
    </source>
</evidence>
<evidence type="ECO:0000303" key="6">
    <source>
    </source>
</evidence>
<evidence type="ECO:0000303" key="7">
    <source>
    </source>
</evidence>
<evidence type="ECO:0000305" key="8"/>
<evidence type="ECO:0007829" key="9">
    <source>
        <dbReference type="PDB" id="6UYB"/>
    </source>
</evidence>
<evidence type="ECO:0007829" key="10">
    <source>
        <dbReference type="PDB" id="7TYP"/>
    </source>
</evidence>
<name>TEAD2_HUMAN</name>
<feature type="chain" id="PRO_0000205932" description="Transcriptional enhancer factor TEF-4">
    <location>
        <begin position="1"/>
        <end position="447"/>
    </location>
</feature>
<feature type="DNA-binding region" description="TEA" evidence="2">
    <location>
        <begin position="38"/>
        <end position="114"/>
    </location>
</feature>
<feature type="region of interest" description="Disordered" evidence="3">
    <location>
        <begin position="1"/>
        <end position="46"/>
    </location>
</feature>
<feature type="region of interest" description="Transcriptional activation" evidence="1">
    <location>
        <begin position="172"/>
        <end position="447"/>
    </location>
</feature>
<feature type="region of interest" description="Disordered" evidence="3">
    <location>
        <begin position="183"/>
        <end position="218"/>
    </location>
</feature>
<feature type="compositionally biased region" description="Low complexity" evidence="3">
    <location>
        <begin position="11"/>
        <end position="20"/>
    </location>
</feature>
<feature type="compositionally biased region" description="Gly residues" evidence="3">
    <location>
        <begin position="25"/>
        <end position="40"/>
    </location>
</feature>
<feature type="compositionally biased region" description="Low complexity" evidence="3">
    <location>
        <begin position="183"/>
        <end position="206"/>
    </location>
</feature>
<feature type="compositionally biased region" description="Pro residues" evidence="3">
    <location>
        <begin position="207"/>
        <end position="216"/>
    </location>
</feature>
<feature type="splice variant" id="VSP_045126" description="In isoform 3." evidence="6 7">
    <location>
        <begin position="1"/>
        <end position="131"/>
    </location>
</feature>
<feature type="splice variant" id="VSP_055673" description="In isoform 4." evidence="8">
    <original>K</original>
    <variation>KALNV</variation>
    <location>
        <position position="120"/>
    </location>
</feature>
<feature type="splice variant" id="VSP_045127" description="In isoform 2 and isoform 3." evidence="6 7">
    <original>P</original>
    <variation>PQVV</variation>
    <location>
        <position position="155"/>
    </location>
</feature>
<feature type="sequence conflict" description="In Ref. 5; CAA64214." evidence="8" ref="5">
    <original>P</original>
    <variation>L</variation>
    <location>
        <position position="144"/>
    </location>
</feature>
<feature type="strand" evidence="10">
    <location>
        <begin position="221"/>
        <end position="224"/>
    </location>
</feature>
<feature type="strand" evidence="9">
    <location>
        <begin position="229"/>
        <end position="238"/>
    </location>
</feature>
<feature type="helix" evidence="9">
    <location>
        <begin position="240"/>
        <end position="243"/>
    </location>
</feature>
<feature type="strand" evidence="9">
    <location>
        <begin position="249"/>
        <end position="254"/>
    </location>
</feature>
<feature type="strand" evidence="9">
    <location>
        <begin position="267"/>
        <end position="270"/>
    </location>
</feature>
<feature type="helix" evidence="9">
    <location>
        <begin position="271"/>
        <end position="277"/>
    </location>
</feature>
<feature type="strand" evidence="10">
    <location>
        <begin position="281"/>
        <end position="283"/>
    </location>
</feature>
<feature type="helix" evidence="9">
    <location>
        <begin position="285"/>
        <end position="291"/>
    </location>
</feature>
<feature type="helix" evidence="9">
    <location>
        <begin position="294"/>
        <end position="296"/>
    </location>
</feature>
<feature type="strand" evidence="9">
    <location>
        <begin position="297"/>
        <end position="304"/>
    </location>
</feature>
<feature type="strand" evidence="9">
    <location>
        <begin position="326"/>
        <end position="337"/>
    </location>
</feature>
<feature type="strand" evidence="9">
    <location>
        <begin position="340"/>
        <end position="349"/>
    </location>
</feature>
<feature type="strand" evidence="9">
    <location>
        <begin position="352"/>
        <end position="362"/>
    </location>
</feature>
<feature type="strand" evidence="9">
    <location>
        <begin position="364"/>
        <end position="366"/>
    </location>
</feature>
<feature type="strand" evidence="9">
    <location>
        <begin position="369"/>
        <end position="378"/>
    </location>
</feature>
<feature type="helix" evidence="9">
    <location>
        <begin position="381"/>
        <end position="390"/>
    </location>
</feature>
<feature type="helix" evidence="9">
    <location>
        <begin position="396"/>
        <end position="403"/>
    </location>
</feature>
<feature type="strand" evidence="9">
    <location>
        <begin position="406"/>
        <end position="414"/>
    </location>
</feature>
<feature type="turn" evidence="9">
    <location>
        <begin position="415"/>
        <end position="417"/>
    </location>
</feature>
<feature type="strand" evidence="9">
    <location>
        <begin position="420"/>
        <end position="430"/>
    </location>
</feature>
<feature type="turn" evidence="9">
    <location>
        <begin position="433"/>
        <end position="435"/>
    </location>
</feature>
<feature type="strand" evidence="9">
    <location>
        <begin position="438"/>
        <end position="445"/>
    </location>
</feature>
<gene>
    <name type="primary">TEAD2</name>
    <name type="synonym">TEF4</name>
</gene>
<organism>
    <name type="scientific">Homo sapiens</name>
    <name type="common">Human</name>
    <dbReference type="NCBI Taxonomy" id="9606"/>
    <lineage>
        <taxon>Eukaryota</taxon>
        <taxon>Metazoa</taxon>
        <taxon>Chordata</taxon>
        <taxon>Craniata</taxon>
        <taxon>Vertebrata</taxon>
        <taxon>Euteleostomi</taxon>
        <taxon>Mammalia</taxon>
        <taxon>Eutheria</taxon>
        <taxon>Euarchontoglires</taxon>
        <taxon>Primates</taxon>
        <taxon>Haplorrhini</taxon>
        <taxon>Catarrhini</taxon>
        <taxon>Hominidae</taxon>
        <taxon>Homo</taxon>
    </lineage>
</organism>
<proteinExistence type="evidence at protein level"/>
<keyword id="KW-0002">3D-structure</keyword>
<keyword id="KW-0010">Activator</keyword>
<keyword id="KW-0025">Alternative splicing</keyword>
<keyword id="KW-0238">DNA-binding</keyword>
<keyword id="KW-0539">Nucleus</keyword>
<keyword id="KW-1267">Proteomics identification</keyword>
<keyword id="KW-1185">Reference proteome</keyword>
<keyword id="KW-0804">Transcription</keyword>
<keyword id="KW-0805">Transcription regulation</keyword>
<comment type="function">
    <text evidence="4 5">Transcription factor which plays a key role in the Hippo signaling pathway, a pathway involved in organ size control and tumor suppression by restricting proliferation and promoting apoptosis. The core of this pathway is composed of a kinase cascade wherein MST1/MST2, in complex with its regulatory protein SAV1, phosphorylates and activates LATS1/2 in complex with its regulatory protein MOB1, which in turn phosphorylates and inactivates YAP1 oncoprotein and WWTR1/TAZ. Acts by mediating gene expression of YAP1 and WWTR1/TAZ, thereby regulating cell proliferation, migration and epithelial mesenchymal transition (EMT) induction. Binds to the SPH and GT-IIC 'enhansons' (5'-GTGGAATGT-3'). May be involved in the gene regulation of neural development. Binds to the M-CAT motif.</text>
</comment>
<comment type="subunit">
    <text evidence="4 5">Interacts with YAP1 and WWTR1/TAZ.</text>
</comment>
<comment type="interaction">
    <interactant intactId="EBI-6427252">
        <id>Q15562</id>
    </interactant>
    <interactant intactId="EBI-10247136">
        <id>Q5TBC7</id>
        <label>BCL2L15</label>
    </interactant>
    <organismsDiffer>false</organismsDiffer>
    <experiments>4</experiments>
</comment>
<comment type="interaction">
    <interactant intactId="EBI-6427252">
        <id>Q15562</id>
    </interactant>
    <interactant intactId="EBI-1055994">
        <id>Q15853</id>
        <label>USF2</label>
    </interactant>
    <organismsDiffer>false</organismsDiffer>
    <experiments>3</experiments>
</comment>
<comment type="interaction">
    <interactant intactId="EBI-6427252">
        <id>Q15562</id>
    </interactant>
    <interactant intactId="EBI-1044059">
        <id>P46937</id>
        <label>YAP1</label>
    </interactant>
    <organismsDiffer>false</organismsDiffer>
    <experiments>9</experiments>
</comment>
<comment type="interaction">
    <interactant intactId="EBI-9370956">
        <id>Q15562-2</id>
    </interactant>
    <interactant intactId="EBI-11427343">
        <id>Q9P2W3</id>
        <label>GNG13</label>
    </interactant>
    <organismsDiffer>false</organismsDiffer>
    <experiments>3</experiments>
</comment>
<comment type="interaction">
    <interactant intactId="EBI-9370956">
        <id>Q15562-2</id>
    </interactant>
    <interactant intactId="EBI-8670520">
        <id>Q14642</id>
        <label>INPP5A</label>
    </interactant>
    <organismsDiffer>false</organismsDiffer>
    <experiments>3</experiments>
</comment>
<comment type="interaction">
    <interactant intactId="EBI-9370956">
        <id>Q15562-2</id>
    </interactant>
    <interactant intactId="EBI-12001422">
        <id>Q01196-8</id>
        <label>RUNX1</label>
    </interactant>
    <organismsDiffer>false</organismsDiffer>
    <experiments>3</experiments>
</comment>
<comment type="interaction">
    <interactant intactId="EBI-9370956">
        <id>Q15562-2</id>
    </interactant>
    <interactant intactId="EBI-12182077">
        <id>Q8N1H7</id>
        <label>SIX6OS1</label>
    </interactant>
    <organismsDiffer>false</organismsDiffer>
    <experiments>3</experiments>
</comment>
<comment type="interaction">
    <interactant intactId="EBI-9370956">
        <id>Q15562-2</id>
    </interactant>
    <interactant intactId="EBI-2129889">
        <id>O75382</id>
        <label>TRIM3</label>
    </interactant>
    <organismsDiffer>false</organismsDiffer>
    <experiments>3</experiments>
</comment>
<comment type="interaction">
    <interactant intactId="EBI-9370956">
        <id>Q15562-2</id>
    </interactant>
    <interactant intactId="EBI-11983165">
        <id>Q99990</id>
        <label>VGLL1</label>
    </interactant>
    <organismsDiffer>false</organismsDiffer>
    <experiments>3</experiments>
</comment>
<comment type="interaction">
    <interactant intactId="EBI-9370956">
        <id>Q15562-2</id>
    </interactant>
    <interactant intactId="EBI-11957216">
        <id>A8MV65-2</id>
        <label>VGLL3</label>
    </interactant>
    <organismsDiffer>false</organismsDiffer>
    <experiments>3</experiments>
</comment>
<comment type="interaction">
    <interactant intactId="EBI-9370956">
        <id>Q15562-2</id>
    </interactant>
    <interactant intactId="EBI-5278589">
        <id>Q14135</id>
        <label>VGLL4</label>
    </interactant>
    <organismsDiffer>false</organismsDiffer>
    <experiments>3</experiments>
</comment>
<comment type="interaction">
    <interactant intactId="EBI-9370956">
        <id>Q15562-2</id>
    </interactant>
    <interactant intactId="EBI-747743">
        <id>Q9GZV5</id>
        <label>WWTR1</label>
    </interactant>
    <organismsDiffer>false</organismsDiffer>
    <experiments>3</experiments>
</comment>
<comment type="interaction">
    <interactant intactId="EBI-9370956">
        <id>Q15562-2</id>
    </interactant>
    <interactant intactId="EBI-1044059">
        <id>P46937</id>
        <label>YAP1</label>
    </interactant>
    <organismsDiffer>false</organismsDiffer>
    <experiments>3</experiments>
</comment>
<comment type="subcellular location">
    <subcellularLocation>
        <location>Nucleus</location>
    </subcellularLocation>
</comment>
<comment type="alternative products">
    <event type="alternative splicing"/>
    <isoform>
        <id>Q15562-1</id>
        <name>1</name>
        <sequence type="displayed"/>
    </isoform>
    <isoform>
        <id>Q15562-2</id>
        <name>2</name>
        <sequence type="described" ref="VSP_045127"/>
    </isoform>
    <isoform>
        <id>Q15562-3</id>
        <name>3</name>
        <sequence type="described" ref="VSP_045126 VSP_045127"/>
    </isoform>
    <isoform>
        <id>Q15562-4</id>
        <name>4</name>
        <sequence type="described" ref="VSP_055673"/>
    </isoform>
</comment>
<sequence>MGEPRAGAALDDGSGWTGSEEGSEEGTGGSEGAGGDGGPDAEGVWSPDIEQSFQEALAIYPPCGRRKIILSDEGKMYGRNELIARYIKLRTGKTRTRKQVSSHIQVLARRKSREIQSKLKDQVSKDKAFQTMATMSSAQLISAPSLQAKLGPTGPQASELFQFWSGGSGPPWNVPDVKPFSQTPFTLSLTPPSTDLPGYEPPQALSPLPPPTPSPPAWQARGLGTARLQLVEFSAFVEPPDAVDSYQRHLFVHISQHCPSPGAPPLESVDVRQIYDKFPEKKGGLRELYDRGPPHAFFLVKFWADLNWGPSGEEAGAGGSISSGGFYGVSSQYESLEHMTLTCSSKVCSFGKQVVEKVETERAQLEDGRFVYRLLRSPMCEYLVNFLHKLRQLPERYMMNSVLENFTILQVVTNRDTQELLLCTAYVFEVSTSERGAQHHIYRLVRD</sequence>
<accession>Q15562</accession>
<accession>B4DTJ6</accession>
<accession>M0R1T9</accession>
<accession>Q8NA25</accession>
<accession>Q96IG3</accession>
<dbReference type="EMBL" id="AK093236">
    <property type="protein sequence ID" value="BAC04104.1"/>
    <property type="molecule type" value="mRNA"/>
</dbReference>
<dbReference type="EMBL" id="AK290736">
    <property type="protein sequence ID" value="BAF83425.1"/>
    <property type="molecule type" value="mRNA"/>
</dbReference>
<dbReference type="EMBL" id="AK300241">
    <property type="protein sequence ID" value="BAG62008.1"/>
    <property type="molecule type" value="mRNA"/>
</dbReference>
<dbReference type="EMBL" id="AC010524">
    <property type="status" value="NOT_ANNOTATED_CDS"/>
    <property type="molecule type" value="Genomic_DNA"/>
</dbReference>
<dbReference type="EMBL" id="CH471177">
    <property type="protein sequence ID" value="EAW52469.1"/>
    <property type="molecule type" value="Genomic_DNA"/>
</dbReference>
<dbReference type="EMBL" id="BC051301">
    <property type="protein sequence ID" value="AAH51301.1"/>
    <property type="molecule type" value="mRNA"/>
</dbReference>
<dbReference type="EMBL" id="BC007556">
    <property type="protein sequence ID" value="AAH07556.1"/>
    <property type="molecule type" value="mRNA"/>
</dbReference>
<dbReference type="EMBL" id="BC018803">
    <property type="status" value="NOT_ANNOTATED_CDS"/>
    <property type="molecule type" value="mRNA"/>
</dbReference>
<dbReference type="EMBL" id="X94440">
    <property type="protein sequence ID" value="CAA64214.1"/>
    <property type="molecule type" value="mRNA"/>
</dbReference>
<dbReference type="CCDS" id="CCDS12761.1">
    <molecule id="Q15562-1"/>
</dbReference>
<dbReference type="CCDS" id="CCDS58670.1">
    <molecule id="Q15562-3"/>
</dbReference>
<dbReference type="CCDS" id="CCDS58671.1">
    <molecule id="Q15562-2"/>
</dbReference>
<dbReference type="CCDS" id="CCDS59406.1">
    <molecule id="Q15562-4"/>
</dbReference>
<dbReference type="PIR" id="G01116">
    <property type="entry name" value="G01116"/>
</dbReference>
<dbReference type="RefSeq" id="NP_001243587.1">
    <molecule id="Q15562-2"/>
    <property type="nucleotide sequence ID" value="NM_001256658.2"/>
</dbReference>
<dbReference type="RefSeq" id="NP_001243588.1">
    <molecule id="Q15562-2"/>
    <property type="nucleotide sequence ID" value="NM_001256659.2"/>
</dbReference>
<dbReference type="RefSeq" id="NP_001243589.1">
    <molecule id="Q15562-4"/>
    <property type="nucleotide sequence ID" value="NM_001256660.2"/>
</dbReference>
<dbReference type="RefSeq" id="NP_001243590.1">
    <molecule id="Q15562-4"/>
    <property type="nucleotide sequence ID" value="NM_001256661.2"/>
</dbReference>
<dbReference type="RefSeq" id="NP_001243591.1">
    <molecule id="Q15562-3"/>
    <property type="nucleotide sequence ID" value="NM_001256662.2"/>
</dbReference>
<dbReference type="RefSeq" id="NP_003589.1">
    <molecule id="Q15562-1"/>
    <property type="nucleotide sequence ID" value="NM_003598.2"/>
</dbReference>
<dbReference type="RefSeq" id="XP_006723487.1">
    <property type="nucleotide sequence ID" value="XM_006723424.1"/>
</dbReference>
<dbReference type="RefSeq" id="XP_011525705.1">
    <molecule id="Q15562-2"/>
    <property type="nucleotide sequence ID" value="XM_011527403.2"/>
</dbReference>
<dbReference type="RefSeq" id="XP_047295479.1">
    <molecule id="Q15562-4"/>
    <property type="nucleotide sequence ID" value="XM_047439523.1"/>
</dbReference>
<dbReference type="RefSeq" id="XP_047295480.1">
    <molecule id="Q15562-4"/>
    <property type="nucleotide sequence ID" value="XM_047439524.1"/>
</dbReference>
<dbReference type="RefSeq" id="XP_047295481.1">
    <molecule id="Q15562-2"/>
    <property type="nucleotide sequence ID" value="XM_047439525.1"/>
</dbReference>
<dbReference type="RefSeq" id="XP_047295482.1">
    <molecule id="Q15562-2"/>
    <property type="nucleotide sequence ID" value="XM_047439526.1"/>
</dbReference>
<dbReference type="RefSeq" id="XP_047295483.1">
    <molecule id="Q15562-2"/>
    <property type="nucleotide sequence ID" value="XM_047439527.1"/>
</dbReference>
<dbReference type="RefSeq" id="XP_047295484.1">
    <molecule id="Q15562-1"/>
    <property type="nucleotide sequence ID" value="XM_047439528.1"/>
</dbReference>
<dbReference type="RefSeq" id="XP_047295485.1">
    <molecule id="Q15562-1"/>
    <property type="nucleotide sequence ID" value="XM_047439529.1"/>
</dbReference>
<dbReference type="RefSeq" id="XP_047295486.1">
    <molecule id="Q15562-1"/>
    <property type="nucleotide sequence ID" value="XM_047439530.1"/>
</dbReference>
<dbReference type="RefSeq" id="XP_047295487.1">
    <molecule id="Q15562-1"/>
    <property type="nucleotide sequence ID" value="XM_047439531.1"/>
</dbReference>
<dbReference type="RefSeq" id="XP_047295488.1">
    <molecule id="Q15562-1"/>
    <property type="nucleotide sequence ID" value="XM_047439532.1"/>
</dbReference>
<dbReference type="RefSeq" id="XP_054178347.1">
    <molecule id="Q15562-4"/>
    <property type="nucleotide sequence ID" value="XM_054322372.1"/>
</dbReference>
<dbReference type="RefSeq" id="XP_054178348.1">
    <molecule id="Q15562-4"/>
    <property type="nucleotide sequence ID" value="XM_054322373.1"/>
</dbReference>
<dbReference type="RefSeq" id="XP_054178349.1">
    <molecule id="Q15562-2"/>
    <property type="nucleotide sequence ID" value="XM_054322374.1"/>
</dbReference>
<dbReference type="RefSeq" id="XP_054178350.1">
    <molecule id="Q15562-2"/>
    <property type="nucleotide sequence ID" value="XM_054322375.1"/>
</dbReference>
<dbReference type="RefSeq" id="XP_054178351.1">
    <molecule id="Q15562-2"/>
    <property type="nucleotide sequence ID" value="XM_054322376.1"/>
</dbReference>
<dbReference type="RefSeq" id="XP_054178352.1">
    <molecule id="Q15562-2"/>
    <property type="nucleotide sequence ID" value="XM_054322377.1"/>
</dbReference>
<dbReference type="RefSeq" id="XP_054178353.1">
    <molecule id="Q15562-1"/>
    <property type="nucleotide sequence ID" value="XM_054322378.1"/>
</dbReference>
<dbReference type="RefSeq" id="XP_054178354.1">
    <molecule id="Q15562-1"/>
    <property type="nucleotide sequence ID" value="XM_054322379.1"/>
</dbReference>
<dbReference type="RefSeq" id="XP_054178355.1">
    <molecule id="Q15562-1"/>
    <property type="nucleotide sequence ID" value="XM_054322380.1"/>
</dbReference>
<dbReference type="RefSeq" id="XP_054178356.1">
    <molecule id="Q15562-1"/>
    <property type="nucleotide sequence ID" value="XM_054322381.1"/>
</dbReference>
<dbReference type="RefSeq" id="XP_054178357.1">
    <molecule id="Q15562-1"/>
    <property type="nucleotide sequence ID" value="XM_054322382.1"/>
</dbReference>
<dbReference type="PDB" id="3L15">
    <property type="method" value="X-ray"/>
    <property type="resolution" value="2.00 A"/>
    <property type="chains" value="A/B=217-447"/>
</dbReference>
<dbReference type="PDB" id="5DQ8">
    <property type="method" value="X-ray"/>
    <property type="resolution" value="2.31 A"/>
    <property type="chains" value="A/B=217-447"/>
</dbReference>
<dbReference type="PDB" id="5DQE">
    <property type="method" value="X-ray"/>
    <property type="resolution" value="2.18 A"/>
    <property type="chains" value="A/B=217-447"/>
</dbReference>
<dbReference type="PDB" id="5EMV">
    <property type="method" value="X-ray"/>
    <property type="resolution" value="2.00 A"/>
    <property type="chains" value="A/B=218-446"/>
</dbReference>
<dbReference type="PDB" id="5HGU">
    <property type="method" value="X-ray"/>
    <property type="resolution" value="2.05 A"/>
    <property type="chains" value="A/B=217-447"/>
</dbReference>
<dbReference type="PDB" id="6CDY">
    <property type="method" value="X-ray"/>
    <property type="resolution" value="2.32 A"/>
    <property type="chains" value="A/B=217-447"/>
</dbReference>
<dbReference type="PDB" id="6E5G">
    <property type="method" value="X-ray"/>
    <property type="resolution" value="2.43 A"/>
    <property type="chains" value="A/B=217-447"/>
</dbReference>
<dbReference type="PDB" id="6S60">
    <property type="method" value="X-ray"/>
    <property type="resolution" value="2.00 A"/>
    <property type="chains" value="A/B=217-447"/>
</dbReference>
<dbReference type="PDB" id="6S64">
    <property type="method" value="X-ray"/>
    <property type="resolution" value="2.22 A"/>
    <property type="chains" value="A/B=217-447"/>
</dbReference>
<dbReference type="PDB" id="6S66">
    <property type="method" value="X-ray"/>
    <property type="resolution" value="2.20 A"/>
    <property type="chains" value="A/B=217-447"/>
</dbReference>
<dbReference type="PDB" id="6S69">
    <property type="method" value="X-ray"/>
    <property type="resolution" value="2.15 A"/>
    <property type="chains" value="A/B=217-447"/>
</dbReference>
<dbReference type="PDB" id="6S6J">
    <property type="method" value="X-ray"/>
    <property type="resolution" value="2.10 A"/>
    <property type="chains" value="A/B=217-447"/>
</dbReference>
<dbReference type="PDB" id="6UYB">
    <property type="method" value="X-ray"/>
    <property type="resolution" value="1.54 A"/>
    <property type="chains" value="A/B=217-447"/>
</dbReference>
<dbReference type="PDB" id="6UYC">
    <property type="method" value="X-ray"/>
    <property type="resolution" value="1.66 A"/>
    <property type="chains" value="A/B=217-447"/>
</dbReference>
<dbReference type="PDB" id="6VAH">
    <property type="method" value="X-ray"/>
    <property type="resolution" value="2.11 A"/>
    <property type="chains" value="A/B=217-447"/>
</dbReference>
<dbReference type="PDB" id="7OYJ">
    <property type="method" value="X-ray"/>
    <property type="resolution" value="1.91 A"/>
    <property type="chains" value="A/B=217-447"/>
</dbReference>
<dbReference type="PDB" id="7T2J">
    <property type="method" value="X-ray"/>
    <property type="resolution" value="2.70 A"/>
    <property type="chains" value="A/B=217-447"/>
</dbReference>
<dbReference type="PDB" id="7T2K">
    <property type="method" value="X-ray"/>
    <property type="resolution" value="2.34 A"/>
    <property type="chains" value="A/B=217-447"/>
</dbReference>
<dbReference type="PDB" id="7T2L">
    <property type="method" value="X-ray"/>
    <property type="resolution" value="2.15 A"/>
    <property type="chains" value="A/B=217-447"/>
</dbReference>
<dbReference type="PDB" id="7T2M">
    <property type="method" value="X-ray"/>
    <property type="resolution" value="2.81 A"/>
    <property type="chains" value="A/B=217-447"/>
</dbReference>
<dbReference type="PDB" id="7TYP">
    <property type="method" value="X-ray"/>
    <property type="resolution" value="1.60 A"/>
    <property type="chains" value="A/B=217-447"/>
</dbReference>
<dbReference type="PDB" id="7TYQ">
    <property type="method" value="X-ray"/>
    <property type="resolution" value="1.88 A"/>
    <property type="chains" value="A/B=217-447"/>
</dbReference>
<dbReference type="PDB" id="7TYU">
    <property type="method" value="X-ray"/>
    <property type="resolution" value="1.78 A"/>
    <property type="chains" value="A/B=217-447"/>
</dbReference>
<dbReference type="PDB" id="8CUH">
    <property type="method" value="X-ray"/>
    <property type="resolution" value="2.40 A"/>
    <property type="chains" value="A/B=217-447"/>
</dbReference>
<dbReference type="PDB" id="8E1O">
    <property type="method" value="X-ray"/>
    <property type="resolution" value="2.25 A"/>
    <property type="chains" value="A/B=217-447"/>
</dbReference>
<dbReference type="PDB" id="8P29">
    <property type="method" value="X-ray"/>
    <property type="resolution" value="2.06 A"/>
    <property type="chains" value="A/B=217-447"/>
</dbReference>
<dbReference type="PDB" id="8POJ">
    <property type="method" value="X-ray"/>
    <property type="resolution" value="2.45 A"/>
    <property type="chains" value="A/B=217-447"/>
</dbReference>
<dbReference type="PDB" id="8POM">
    <property type="method" value="X-ray"/>
    <property type="resolution" value="1.95 A"/>
    <property type="chains" value="A/B=217-447"/>
</dbReference>
<dbReference type="PDB" id="8PON">
    <property type="method" value="X-ray"/>
    <property type="resolution" value="2.20 A"/>
    <property type="chains" value="A/B=217-447"/>
</dbReference>
<dbReference type="PDB" id="8PUX">
    <property type="method" value="X-ray"/>
    <property type="resolution" value="2.05 A"/>
    <property type="chains" value="A/B=217-447"/>
</dbReference>
<dbReference type="PDB" id="8PUY">
    <property type="method" value="X-ray"/>
    <property type="resolution" value="2.20 A"/>
    <property type="chains" value="A/B=217-447"/>
</dbReference>
<dbReference type="PDB" id="8RXL">
    <property type="method" value="X-ray"/>
    <property type="resolution" value="2.29 A"/>
    <property type="chains" value="A/B=216-447"/>
</dbReference>
<dbReference type="PDB" id="8RXP">
    <property type="method" value="X-ray"/>
    <property type="resolution" value="2.49 A"/>
    <property type="chains" value="A/B=217-447"/>
</dbReference>
<dbReference type="PDB" id="8RXQ">
    <property type="method" value="X-ray"/>
    <property type="resolution" value="2.63 A"/>
    <property type="chains" value="A/B=217-447"/>
</dbReference>
<dbReference type="PDB" id="8RXV">
    <property type="method" value="X-ray"/>
    <property type="resolution" value="2.05 A"/>
    <property type="chains" value="A/B=217-447"/>
</dbReference>
<dbReference type="PDB" id="8RYC">
    <property type="method" value="X-ray"/>
    <property type="resolution" value="2.09 A"/>
    <property type="chains" value="A/B=217-447"/>
</dbReference>
<dbReference type="PDB" id="8YGQ">
    <property type="method" value="X-ray"/>
    <property type="resolution" value="2.71 A"/>
    <property type="chains" value="A/B=221-446"/>
</dbReference>
<dbReference type="PDBsum" id="3L15"/>
<dbReference type="PDBsum" id="5DQ8"/>
<dbReference type="PDBsum" id="5DQE"/>
<dbReference type="PDBsum" id="5EMV"/>
<dbReference type="PDBsum" id="5HGU"/>
<dbReference type="PDBsum" id="6CDY"/>
<dbReference type="PDBsum" id="6E5G"/>
<dbReference type="PDBsum" id="6S60"/>
<dbReference type="PDBsum" id="6S64"/>
<dbReference type="PDBsum" id="6S66"/>
<dbReference type="PDBsum" id="6S69"/>
<dbReference type="PDBsum" id="6S6J"/>
<dbReference type="PDBsum" id="6UYB"/>
<dbReference type="PDBsum" id="6UYC"/>
<dbReference type="PDBsum" id="6VAH"/>
<dbReference type="PDBsum" id="7OYJ"/>
<dbReference type="PDBsum" id="7T2J"/>
<dbReference type="PDBsum" id="7T2K"/>
<dbReference type="PDBsum" id="7T2L"/>
<dbReference type="PDBsum" id="7T2M"/>
<dbReference type="PDBsum" id="7TYP"/>
<dbReference type="PDBsum" id="7TYQ"/>
<dbReference type="PDBsum" id="7TYU"/>
<dbReference type="PDBsum" id="8CUH"/>
<dbReference type="PDBsum" id="8E1O"/>
<dbReference type="PDBsum" id="8P29"/>
<dbReference type="PDBsum" id="8POJ"/>
<dbReference type="PDBsum" id="8POM"/>
<dbReference type="PDBsum" id="8PON"/>
<dbReference type="PDBsum" id="8PUX"/>
<dbReference type="PDBsum" id="8PUY"/>
<dbReference type="PDBsum" id="8RXL"/>
<dbReference type="PDBsum" id="8RXP"/>
<dbReference type="PDBsum" id="8RXQ"/>
<dbReference type="PDBsum" id="8RXV"/>
<dbReference type="PDBsum" id="8RYC"/>
<dbReference type="PDBsum" id="8YGQ"/>
<dbReference type="SMR" id="Q15562"/>
<dbReference type="BioGRID" id="114041">
    <property type="interactions" value="132"/>
</dbReference>
<dbReference type="DIP" id="DIP-59318N"/>
<dbReference type="FunCoup" id="Q15562">
    <property type="interactions" value="853"/>
</dbReference>
<dbReference type="IntAct" id="Q15562">
    <property type="interactions" value="87"/>
</dbReference>
<dbReference type="MINT" id="Q15562"/>
<dbReference type="STRING" id="9606.ENSP00000472109"/>
<dbReference type="BindingDB" id="Q15562"/>
<dbReference type="ChEMBL" id="CHEMBL4523301"/>
<dbReference type="DrugCentral" id="Q15562"/>
<dbReference type="GuidetoPHARMACOLOGY" id="3241"/>
<dbReference type="GlyGen" id="Q15562">
    <property type="glycosylation" value="1 site"/>
</dbReference>
<dbReference type="iPTMnet" id="Q15562"/>
<dbReference type="PhosphoSitePlus" id="Q15562"/>
<dbReference type="SwissPalm" id="Q15562"/>
<dbReference type="BioMuta" id="TEAD2"/>
<dbReference type="DMDM" id="21264529"/>
<dbReference type="jPOST" id="Q15562"/>
<dbReference type="MassIVE" id="Q15562"/>
<dbReference type="PaxDb" id="9606-ENSP00000472109"/>
<dbReference type="PeptideAtlas" id="Q15562"/>
<dbReference type="ProteomicsDB" id="5111"/>
<dbReference type="ProteomicsDB" id="60636">
    <molecule id="Q15562-1"/>
</dbReference>
<dbReference type="Pumba" id="Q15562"/>
<dbReference type="Antibodypedia" id="31984">
    <property type="antibodies" value="261 antibodies from 32 providers"/>
</dbReference>
<dbReference type="DNASU" id="8463"/>
<dbReference type="Ensembl" id="ENST00000311227.6">
    <molecule id="Q15562-1"/>
    <property type="protein sequence ID" value="ENSP00000310701.1"/>
    <property type="gene ID" value="ENSG00000074219.14"/>
</dbReference>
<dbReference type="Ensembl" id="ENST00000377214.8">
    <molecule id="Q15562-2"/>
    <property type="protein sequence ID" value="ENSP00000366419.4"/>
    <property type="gene ID" value="ENSG00000074219.14"/>
</dbReference>
<dbReference type="Ensembl" id="ENST00000539846.5">
    <molecule id="Q15562-3"/>
    <property type="protein sequence ID" value="ENSP00000437928.1"/>
    <property type="gene ID" value="ENSG00000074219.14"/>
</dbReference>
<dbReference type="Ensembl" id="ENST00000593945.6">
    <molecule id="Q15562-4"/>
    <property type="protein sequence ID" value="ENSP00000469640.2"/>
    <property type="gene ID" value="ENSG00000074219.14"/>
</dbReference>
<dbReference type="Ensembl" id="ENST00000598810.5">
    <molecule id="Q15562-4"/>
    <property type="protein sequence ID" value="ENSP00000472109.1"/>
    <property type="gene ID" value="ENSG00000074219.14"/>
</dbReference>
<dbReference type="Ensembl" id="ENST00000601519.5">
    <molecule id="Q15562-2"/>
    <property type="protein sequence ID" value="ENSP00000469672.1"/>
    <property type="gene ID" value="ENSG00000074219.14"/>
</dbReference>
<dbReference type="GeneID" id="8463"/>
<dbReference type="KEGG" id="hsa:8463"/>
<dbReference type="MANE-Select" id="ENST00000593945.6">
    <molecule id="Q15562-4"/>
    <property type="protein sequence ID" value="ENSP00000469640.2"/>
    <property type="RefSeq nucleotide sequence ID" value="NM_001256660.2"/>
    <property type="RefSeq protein sequence ID" value="NP_001243589.1"/>
</dbReference>
<dbReference type="UCSC" id="uc002png.5">
    <molecule id="Q15562-1"/>
    <property type="organism name" value="human"/>
</dbReference>
<dbReference type="AGR" id="HGNC:11715"/>
<dbReference type="CTD" id="8463"/>
<dbReference type="DisGeNET" id="8463"/>
<dbReference type="GeneCards" id="TEAD2"/>
<dbReference type="HGNC" id="HGNC:11715">
    <property type="gene designation" value="TEAD2"/>
</dbReference>
<dbReference type="HPA" id="ENSG00000074219">
    <property type="expression patterns" value="Low tissue specificity"/>
</dbReference>
<dbReference type="MIM" id="601729">
    <property type="type" value="gene"/>
</dbReference>
<dbReference type="neXtProt" id="NX_Q15562"/>
<dbReference type="OpenTargets" id="ENSG00000074219"/>
<dbReference type="PharmGKB" id="PA36433"/>
<dbReference type="VEuPathDB" id="HostDB:ENSG00000074219"/>
<dbReference type="eggNOG" id="KOG3841">
    <property type="taxonomic scope" value="Eukaryota"/>
</dbReference>
<dbReference type="GeneTree" id="ENSGT00950000182956"/>
<dbReference type="HOGENOM" id="CLU_012515_2_0_1"/>
<dbReference type="InParanoid" id="Q15562"/>
<dbReference type="OMA" id="IFQFWSG"/>
<dbReference type="OrthoDB" id="10006572at2759"/>
<dbReference type="PAN-GO" id="Q15562">
    <property type="GO annotations" value="6 GO annotations based on evolutionary models"/>
</dbReference>
<dbReference type="PhylomeDB" id="Q15562"/>
<dbReference type="TreeFam" id="TF313443"/>
<dbReference type="PathwayCommons" id="Q15562"/>
<dbReference type="Reactome" id="R-HSA-2032785">
    <property type="pathway name" value="YAP1- and WWTR1 (TAZ)-stimulated gene expression"/>
</dbReference>
<dbReference type="Reactome" id="R-HSA-8951671">
    <property type="pathway name" value="RUNX3 regulates YAP1-mediated transcription"/>
</dbReference>
<dbReference type="Reactome" id="R-HSA-9796292">
    <property type="pathway name" value="Formation of axial mesoderm"/>
</dbReference>
<dbReference type="SignaLink" id="Q15562"/>
<dbReference type="SIGNOR" id="Q15562"/>
<dbReference type="BioGRID-ORCS" id="8463">
    <property type="hits" value="14 hits in 1183 CRISPR screens"/>
</dbReference>
<dbReference type="ChiTaRS" id="TEAD2">
    <property type="organism name" value="human"/>
</dbReference>
<dbReference type="EvolutionaryTrace" id="Q15562"/>
<dbReference type="GeneWiki" id="TEAD2"/>
<dbReference type="GenomeRNAi" id="8463"/>
<dbReference type="Pharos" id="Q15562">
    <property type="development level" value="Tbio"/>
</dbReference>
<dbReference type="PRO" id="PR:Q15562"/>
<dbReference type="Proteomes" id="UP000005640">
    <property type="component" value="Chromosome 19"/>
</dbReference>
<dbReference type="RNAct" id="Q15562">
    <property type="molecule type" value="protein"/>
</dbReference>
<dbReference type="Bgee" id="ENSG00000074219">
    <property type="expression patterns" value="Expressed in vena cava and 149 other cell types or tissues"/>
</dbReference>
<dbReference type="ExpressionAtlas" id="Q15562">
    <property type="expression patterns" value="baseline and differential"/>
</dbReference>
<dbReference type="GO" id="GO:0000785">
    <property type="term" value="C:chromatin"/>
    <property type="evidence" value="ECO:0000247"/>
    <property type="project" value="NTNU_SB"/>
</dbReference>
<dbReference type="GO" id="GO:0005829">
    <property type="term" value="C:cytosol"/>
    <property type="evidence" value="ECO:0000314"/>
    <property type="project" value="HPA"/>
</dbReference>
<dbReference type="GO" id="GO:0043231">
    <property type="term" value="C:intracellular membrane-bounded organelle"/>
    <property type="evidence" value="ECO:0000314"/>
    <property type="project" value="HPA"/>
</dbReference>
<dbReference type="GO" id="GO:0005654">
    <property type="term" value="C:nucleoplasm"/>
    <property type="evidence" value="ECO:0000314"/>
    <property type="project" value="HPA"/>
</dbReference>
<dbReference type="GO" id="GO:0005634">
    <property type="term" value="C:nucleus"/>
    <property type="evidence" value="ECO:0000303"/>
    <property type="project" value="UniProtKB"/>
</dbReference>
<dbReference type="GO" id="GO:0140552">
    <property type="term" value="C:TEAD-YAP complex"/>
    <property type="evidence" value="ECO:0000314"/>
    <property type="project" value="CAFA"/>
</dbReference>
<dbReference type="GO" id="GO:0005667">
    <property type="term" value="C:transcription regulator complex"/>
    <property type="evidence" value="ECO:0000318"/>
    <property type="project" value="GO_Central"/>
</dbReference>
<dbReference type="GO" id="GO:0097718">
    <property type="term" value="F:disordered domain specific binding"/>
    <property type="evidence" value="ECO:0000315"/>
    <property type="project" value="CAFA"/>
</dbReference>
<dbReference type="GO" id="GO:0003700">
    <property type="term" value="F:DNA-binding transcription factor activity"/>
    <property type="evidence" value="ECO:0000314"/>
    <property type="project" value="UniProtKB"/>
</dbReference>
<dbReference type="GO" id="GO:0000981">
    <property type="term" value="F:DNA-binding transcription factor activity, RNA polymerase II-specific"/>
    <property type="evidence" value="ECO:0000247"/>
    <property type="project" value="NTNU_SB"/>
</dbReference>
<dbReference type="GO" id="GO:0000978">
    <property type="term" value="F:RNA polymerase II cis-regulatory region sequence-specific DNA binding"/>
    <property type="evidence" value="ECO:0000318"/>
    <property type="project" value="GO_Central"/>
</dbReference>
<dbReference type="GO" id="GO:1990837">
    <property type="term" value="F:sequence-specific double-stranded DNA binding"/>
    <property type="evidence" value="ECO:0000314"/>
    <property type="project" value="ARUK-UCL"/>
</dbReference>
<dbReference type="GO" id="GO:0001223">
    <property type="term" value="F:transcription coactivator binding"/>
    <property type="evidence" value="ECO:0000353"/>
    <property type="project" value="CAFA"/>
</dbReference>
<dbReference type="GO" id="GO:0071300">
    <property type="term" value="P:cellular response to retinoic acid"/>
    <property type="evidence" value="ECO:0007669"/>
    <property type="project" value="Ensembl"/>
</dbReference>
<dbReference type="GO" id="GO:0003143">
    <property type="term" value="P:embryonic heart tube morphogenesis"/>
    <property type="evidence" value="ECO:0007669"/>
    <property type="project" value="Ensembl"/>
</dbReference>
<dbReference type="GO" id="GO:0048568">
    <property type="term" value="P:embryonic organ development"/>
    <property type="evidence" value="ECO:0000318"/>
    <property type="project" value="GO_Central"/>
</dbReference>
<dbReference type="GO" id="GO:0035329">
    <property type="term" value="P:hippo signaling"/>
    <property type="evidence" value="ECO:0000314"/>
    <property type="project" value="UniProtKB"/>
</dbReference>
<dbReference type="GO" id="GO:0048368">
    <property type="term" value="P:lateral mesoderm development"/>
    <property type="evidence" value="ECO:0007669"/>
    <property type="project" value="Ensembl"/>
</dbReference>
<dbReference type="GO" id="GO:0001843">
    <property type="term" value="P:neural tube closure"/>
    <property type="evidence" value="ECO:0007669"/>
    <property type="project" value="Ensembl"/>
</dbReference>
<dbReference type="GO" id="GO:0030903">
    <property type="term" value="P:notochord development"/>
    <property type="evidence" value="ECO:0007669"/>
    <property type="project" value="Ensembl"/>
</dbReference>
<dbReference type="GO" id="GO:0048339">
    <property type="term" value="P:paraxial mesoderm development"/>
    <property type="evidence" value="ECO:0007669"/>
    <property type="project" value="Ensembl"/>
</dbReference>
<dbReference type="GO" id="GO:0045893">
    <property type="term" value="P:positive regulation of DNA-templated transcription"/>
    <property type="evidence" value="ECO:0000315"/>
    <property type="project" value="CAFA"/>
</dbReference>
<dbReference type="GO" id="GO:0045944">
    <property type="term" value="P:positive regulation of transcription by RNA polymerase II"/>
    <property type="evidence" value="ECO:0007669"/>
    <property type="project" value="Ensembl"/>
</dbReference>
<dbReference type="GO" id="GO:0065003">
    <property type="term" value="P:protein-containing complex assembly"/>
    <property type="evidence" value="ECO:0000315"/>
    <property type="project" value="CAFA"/>
</dbReference>
<dbReference type="GO" id="GO:0006355">
    <property type="term" value="P:regulation of DNA-templated transcription"/>
    <property type="evidence" value="ECO:0000303"/>
    <property type="project" value="UniProtKB"/>
</dbReference>
<dbReference type="GO" id="GO:2000736">
    <property type="term" value="P:regulation of stem cell differentiation"/>
    <property type="evidence" value="ECO:0007669"/>
    <property type="project" value="Ensembl"/>
</dbReference>
<dbReference type="GO" id="GO:0006357">
    <property type="term" value="P:regulation of transcription by RNA polymerase II"/>
    <property type="evidence" value="ECO:0000318"/>
    <property type="project" value="GO_Central"/>
</dbReference>
<dbReference type="GO" id="GO:0006366">
    <property type="term" value="P:transcription by RNA polymerase II"/>
    <property type="evidence" value="ECO:0007669"/>
    <property type="project" value="Ensembl"/>
</dbReference>
<dbReference type="GO" id="GO:0001570">
    <property type="term" value="P:vasculogenesis"/>
    <property type="evidence" value="ECO:0007669"/>
    <property type="project" value="Ensembl"/>
</dbReference>
<dbReference type="FunFam" id="2.70.50.80:FF:000002">
    <property type="entry name" value="transcriptional enhancer factor TEF-4 isoform X1"/>
    <property type="match status" value="1"/>
</dbReference>
<dbReference type="Gene3D" id="2.70.50.80">
    <property type="match status" value="1"/>
</dbReference>
<dbReference type="Gene3D" id="6.10.20.40">
    <property type="entry name" value="TEA/ATTS domain"/>
    <property type="match status" value="1"/>
</dbReference>
<dbReference type="InterPro" id="IPR000818">
    <property type="entry name" value="TEA/ATTS_dom"/>
</dbReference>
<dbReference type="InterPro" id="IPR038096">
    <property type="entry name" value="TEA/ATTS_sf"/>
</dbReference>
<dbReference type="InterPro" id="IPR050937">
    <property type="entry name" value="TEC1_TEAD_TF"/>
</dbReference>
<dbReference type="InterPro" id="IPR016361">
    <property type="entry name" value="TEF_metazoa"/>
</dbReference>
<dbReference type="InterPro" id="IPR041086">
    <property type="entry name" value="YBD"/>
</dbReference>
<dbReference type="PANTHER" id="PTHR11834">
    <property type="entry name" value="TRANSCRIPTIONAL ENHANCER FACTOR TEF RELATED"/>
    <property type="match status" value="1"/>
</dbReference>
<dbReference type="PANTHER" id="PTHR11834:SF5">
    <property type="entry name" value="TRANSCRIPTIONAL ENHANCER FACTOR TEF-4"/>
    <property type="match status" value="1"/>
</dbReference>
<dbReference type="Pfam" id="PF01285">
    <property type="entry name" value="TEA"/>
    <property type="match status" value="1"/>
</dbReference>
<dbReference type="Pfam" id="PF17725">
    <property type="entry name" value="YBD"/>
    <property type="match status" value="1"/>
</dbReference>
<dbReference type="PIRSF" id="PIRSF002603">
    <property type="entry name" value="TEF"/>
    <property type="match status" value="1"/>
</dbReference>
<dbReference type="PRINTS" id="PR00065">
    <property type="entry name" value="TEADOMAIN"/>
</dbReference>
<dbReference type="SMART" id="SM00426">
    <property type="entry name" value="TEA"/>
    <property type="match status" value="1"/>
</dbReference>
<dbReference type="PROSITE" id="PS00554">
    <property type="entry name" value="TEA_1"/>
    <property type="match status" value="1"/>
</dbReference>
<dbReference type="PROSITE" id="PS51088">
    <property type="entry name" value="TEA_2"/>
    <property type="match status" value="1"/>
</dbReference>
<reference key="1">
    <citation type="journal article" date="2004" name="Nat. Genet.">
        <title>Complete sequencing and characterization of 21,243 full-length human cDNAs.</title>
        <authorList>
            <person name="Ota T."/>
            <person name="Suzuki Y."/>
            <person name="Nishikawa T."/>
            <person name="Otsuki T."/>
            <person name="Sugiyama T."/>
            <person name="Irie R."/>
            <person name="Wakamatsu A."/>
            <person name="Hayashi K."/>
            <person name="Sato H."/>
            <person name="Nagai K."/>
            <person name="Kimura K."/>
            <person name="Makita H."/>
            <person name="Sekine M."/>
            <person name="Obayashi M."/>
            <person name="Nishi T."/>
            <person name="Shibahara T."/>
            <person name="Tanaka T."/>
            <person name="Ishii S."/>
            <person name="Yamamoto J."/>
            <person name="Saito K."/>
            <person name="Kawai Y."/>
            <person name="Isono Y."/>
            <person name="Nakamura Y."/>
            <person name="Nagahari K."/>
            <person name="Murakami K."/>
            <person name="Yasuda T."/>
            <person name="Iwayanagi T."/>
            <person name="Wagatsuma M."/>
            <person name="Shiratori A."/>
            <person name="Sudo H."/>
            <person name="Hosoiri T."/>
            <person name="Kaku Y."/>
            <person name="Kodaira H."/>
            <person name="Kondo H."/>
            <person name="Sugawara M."/>
            <person name="Takahashi M."/>
            <person name="Kanda K."/>
            <person name="Yokoi T."/>
            <person name="Furuya T."/>
            <person name="Kikkawa E."/>
            <person name="Omura Y."/>
            <person name="Abe K."/>
            <person name="Kamihara K."/>
            <person name="Katsuta N."/>
            <person name="Sato K."/>
            <person name="Tanikawa M."/>
            <person name="Yamazaki M."/>
            <person name="Ninomiya K."/>
            <person name="Ishibashi T."/>
            <person name="Yamashita H."/>
            <person name="Murakawa K."/>
            <person name="Fujimori K."/>
            <person name="Tanai H."/>
            <person name="Kimata M."/>
            <person name="Watanabe M."/>
            <person name="Hiraoka S."/>
            <person name="Chiba Y."/>
            <person name="Ishida S."/>
            <person name="Ono Y."/>
            <person name="Takiguchi S."/>
            <person name="Watanabe S."/>
            <person name="Yosida M."/>
            <person name="Hotuta T."/>
            <person name="Kusano J."/>
            <person name="Kanehori K."/>
            <person name="Takahashi-Fujii A."/>
            <person name="Hara H."/>
            <person name="Tanase T.-O."/>
            <person name="Nomura Y."/>
            <person name="Togiya S."/>
            <person name="Komai F."/>
            <person name="Hara R."/>
            <person name="Takeuchi K."/>
            <person name="Arita M."/>
            <person name="Imose N."/>
            <person name="Musashino K."/>
            <person name="Yuuki H."/>
            <person name="Oshima A."/>
            <person name="Sasaki N."/>
            <person name="Aotsuka S."/>
            <person name="Yoshikawa Y."/>
            <person name="Matsunawa H."/>
            <person name="Ichihara T."/>
            <person name="Shiohata N."/>
            <person name="Sano S."/>
            <person name="Moriya S."/>
            <person name="Momiyama H."/>
            <person name="Satoh N."/>
            <person name="Takami S."/>
            <person name="Terashima Y."/>
            <person name="Suzuki O."/>
            <person name="Nakagawa S."/>
            <person name="Senoh A."/>
            <person name="Mizoguchi H."/>
            <person name="Goto Y."/>
            <person name="Shimizu F."/>
            <person name="Wakebe H."/>
            <person name="Hishigaki H."/>
            <person name="Watanabe T."/>
            <person name="Sugiyama A."/>
            <person name="Takemoto M."/>
            <person name="Kawakami B."/>
            <person name="Yamazaki M."/>
            <person name="Watanabe K."/>
            <person name="Kumagai A."/>
            <person name="Itakura S."/>
            <person name="Fukuzumi Y."/>
            <person name="Fujimori Y."/>
            <person name="Komiyama M."/>
            <person name="Tashiro H."/>
            <person name="Tanigami A."/>
            <person name="Fujiwara T."/>
            <person name="Ono T."/>
            <person name="Yamada K."/>
            <person name="Fujii Y."/>
            <person name="Ozaki K."/>
            <person name="Hirao M."/>
            <person name="Ohmori Y."/>
            <person name="Kawabata A."/>
            <person name="Hikiji T."/>
            <person name="Kobatake N."/>
            <person name="Inagaki H."/>
            <person name="Ikema Y."/>
            <person name="Okamoto S."/>
            <person name="Okitani R."/>
            <person name="Kawakami T."/>
            <person name="Noguchi S."/>
            <person name="Itoh T."/>
            <person name="Shigeta K."/>
            <person name="Senba T."/>
            <person name="Matsumura K."/>
            <person name="Nakajima Y."/>
            <person name="Mizuno T."/>
            <person name="Morinaga M."/>
            <person name="Sasaki M."/>
            <person name="Togashi T."/>
            <person name="Oyama M."/>
            <person name="Hata H."/>
            <person name="Watanabe M."/>
            <person name="Komatsu T."/>
            <person name="Mizushima-Sugano J."/>
            <person name="Satoh T."/>
            <person name="Shirai Y."/>
            <person name="Takahashi Y."/>
            <person name="Nakagawa K."/>
            <person name="Okumura K."/>
            <person name="Nagase T."/>
            <person name="Nomura N."/>
            <person name="Kikuchi H."/>
            <person name="Masuho Y."/>
            <person name="Yamashita R."/>
            <person name="Nakai K."/>
            <person name="Yada T."/>
            <person name="Nakamura Y."/>
            <person name="Ohara O."/>
            <person name="Isogai T."/>
            <person name="Sugano S."/>
        </authorList>
    </citation>
    <scope>NUCLEOTIDE SEQUENCE [LARGE SCALE MRNA] (ISOFORMS 2 AND 3)</scope>
    <source>
        <tissue>Placenta</tissue>
        <tissue>Testis</tissue>
    </source>
</reference>
<reference key="2">
    <citation type="journal article" date="2004" name="Nature">
        <title>The DNA sequence and biology of human chromosome 19.</title>
        <authorList>
            <person name="Grimwood J."/>
            <person name="Gordon L.A."/>
            <person name="Olsen A.S."/>
            <person name="Terry A."/>
            <person name="Schmutz J."/>
            <person name="Lamerdin J.E."/>
            <person name="Hellsten U."/>
            <person name="Goodstein D."/>
            <person name="Couronne O."/>
            <person name="Tran-Gyamfi M."/>
            <person name="Aerts A."/>
            <person name="Altherr M."/>
            <person name="Ashworth L."/>
            <person name="Bajorek E."/>
            <person name="Black S."/>
            <person name="Branscomb E."/>
            <person name="Caenepeel S."/>
            <person name="Carrano A.V."/>
            <person name="Caoile C."/>
            <person name="Chan Y.M."/>
            <person name="Christensen M."/>
            <person name="Cleland C.A."/>
            <person name="Copeland A."/>
            <person name="Dalin E."/>
            <person name="Dehal P."/>
            <person name="Denys M."/>
            <person name="Detter J.C."/>
            <person name="Escobar J."/>
            <person name="Flowers D."/>
            <person name="Fotopulos D."/>
            <person name="Garcia C."/>
            <person name="Georgescu A.M."/>
            <person name="Glavina T."/>
            <person name="Gomez M."/>
            <person name="Gonzales E."/>
            <person name="Groza M."/>
            <person name="Hammon N."/>
            <person name="Hawkins T."/>
            <person name="Haydu L."/>
            <person name="Ho I."/>
            <person name="Huang W."/>
            <person name="Israni S."/>
            <person name="Jett J."/>
            <person name="Kadner K."/>
            <person name="Kimball H."/>
            <person name="Kobayashi A."/>
            <person name="Larionov V."/>
            <person name="Leem S.-H."/>
            <person name="Lopez F."/>
            <person name="Lou Y."/>
            <person name="Lowry S."/>
            <person name="Malfatti S."/>
            <person name="Martinez D."/>
            <person name="McCready P.M."/>
            <person name="Medina C."/>
            <person name="Morgan J."/>
            <person name="Nelson K."/>
            <person name="Nolan M."/>
            <person name="Ovcharenko I."/>
            <person name="Pitluck S."/>
            <person name="Pollard M."/>
            <person name="Popkie A.P."/>
            <person name="Predki P."/>
            <person name="Quan G."/>
            <person name="Ramirez L."/>
            <person name="Rash S."/>
            <person name="Retterer J."/>
            <person name="Rodriguez A."/>
            <person name="Rogers S."/>
            <person name="Salamov A."/>
            <person name="Salazar A."/>
            <person name="She X."/>
            <person name="Smith D."/>
            <person name="Slezak T."/>
            <person name="Solovyev V."/>
            <person name="Thayer N."/>
            <person name="Tice H."/>
            <person name="Tsai M."/>
            <person name="Ustaszewska A."/>
            <person name="Vo N."/>
            <person name="Wagner M."/>
            <person name="Wheeler J."/>
            <person name="Wu K."/>
            <person name="Xie G."/>
            <person name="Yang J."/>
            <person name="Dubchak I."/>
            <person name="Furey T.S."/>
            <person name="DeJong P."/>
            <person name="Dickson M."/>
            <person name="Gordon D."/>
            <person name="Eichler E.E."/>
            <person name="Pennacchio L.A."/>
            <person name="Richardson P."/>
            <person name="Stubbs L."/>
            <person name="Rokhsar D.S."/>
            <person name="Myers R.M."/>
            <person name="Rubin E.M."/>
            <person name="Lucas S.M."/>
        </authorList>
    </citation>
    <scope>NUCLEOTIDE SEQUENCE [LARGE SCALE GENOMIC DNA]</scope>
</reference>
<reference key="3">
    <citation type="submission" date="2005-07" db="EMBL/GenBank/DDBJ databases">
        <authorList>
            <person name="Mural R.J."/>
            <person name="Istrail S."/>
            <person name="Sutton G.G."/>
            <person name="Florea L."/>
            <person name="Halpern A.L."/>
            <person name="Mobarry C.M."/>
            <person name="Lippert R."/>
            <person name="Walenz B."/>
            <person name="Shatkay H."/>
            <person name="Dew I."/>
            <person name="Miller J.R."/>
            <person name="Flanigan M.J."/>
            <person name="Edwards N.J."/>
            <person name="Bolanos R."/>
            <person name="Fasulo D."/>
            <person name="Halldorsson B.V."/>
            <person name="Hannenhalli S."/>
            <person name="Turner R."/>
            <person name="Yooseph S."/>
            <person name="Lu F."/>
            <person name="Nusskern D.R."/>
            <person name="Shue B.C."/>
            <person name="Zheng X.H."/>
            <person name="Zhong F."/>
            <person name="Delcher A.L."/>
            <person name="Huson D.H."/>
            <person name="Kravitz S.A."/>
            <person name="Mouchard L."/>
            <person name="Reinert K."/>
            <person name="Remington K.A."/>
            <person name="Clark A.G."/>
            <person name="Waterman M.S."/>
            <person name="Eichler E.E."/>
            <person name="Adams M.D."/>
            <person name="Hunkapiller M.W."/>
            <person name="Myers E.W."/>
            <person name="Venter J.C."/>
        </authorList>
    </citation>
    <scope>NUCLEOTIDE SEQUENCE [LARGE SCALE GENOMIC DNA]</scope>
</reference>
<reference key="4">
    <citation type="journal article" date="2004" name="Genome Res.">
        <title>The status, quality, and expansion of the NIH full-length cDNA project: the Mammalian Gene Collection (MGC).</title>
        <authorList>
            <consortium name="The MGC Project Team"/>
        </authorList>
    </citation>
    <scope>NUCLEOTIDE SEQUENCE [LARGE SCALE MRNA] (ISOFORMS 1; 2 AND 3)</scope>
    <source>
        <tissue>Eye</tissue>
        <tissue>Skin</tissue>
    </source>
</reference>
<reference key="5">
    <citation type="journal article" date="1996" name="J. Biol. Chem.">
        <title>A novel family of developmentally regulated mammalian transcription factors containing the TEA/ATTS DNA binding domain.</title>
        <authorList>
            <person name="Jacquemin P."/>
            <person name="Hwang J.-J."/>
            <person name="Martial J.A."/>
            <person name="Dolle P."/>
            <person name="Davidson I."/>
        </authorList>
    </citation>
    <scope>NUCLEOTIDE SEQUENCE [MRNA] OF 32-367</scope>
    <source>
        <tissue>Brain</tissue>
    </source>
</reference>
<reference key="6">
    <citation type="journal article" date="2008" name="Genes Dev.">
        <title>TEAD mediates YAP-dependent gene induction and growth control.</title>
        <authorList>
            <person name="Zhao B."/>
            <person name="Ye X."/>
            <person name="Yu J."/>
            <person name="Li L."/>
            <person name="Li W."/>
            <person name="Li S."/>
            <person name="Yu J."/>
            <person name="Lin J.D."/>
            <person name="Wang C.Y."/>
            <person name="Chinnaiyan A.M."/>
            <person name="Lai Z.C."/>
            <person name="Guan K.L."/>
        </authorList>
    </citation>
    <scope>FUNCTION</scope>
    <scope>INTERACTION WITH YAP1</scope>
</reference>
<reference key="7">
    <citation type="journal article" date="2009" name="J. Biol. Chem.">
        <title>TEAD transcription factors mediate the function of TAZ in cell growth and epithelial-mesenchymal transition.</title>
        <authorList>
            <person name="Zhang H."/>
            <person name="Liu C.Y."/>
            <person name="Zha Z.Y."/>
            <person name="Zhao B."/>
            <person name="Yao J."/>
            <person name="Zhao S."/>
            <person name="Xiong Y."/>
            <person name="Lei Q.Y."/>
            <person name="Guan K.L."/>
        </authorList>
    </citation>
    <scope>IDENTIFICATION BY MASS SPECTROMETRY</scope>
    <scope>FUNCTION</scope>
    <scope>INTERACTION WITH WWTR1</scope>
</reference>
<protein>
    <recommendedName>
        <fullName>Transcriptional enhancer factor TEF-4</fullName>
    </recommendedName>
    <alternativeName>
        <fullName>TEA domain family member 2</fullName>
        <shortName>TEAD-2</shortName>
    </alternativeName>
</protein>